<accession>Q8W9F5</accession>
<sequence length="379" mass="42569">MINIRKKHPLMKILNESFIDLPTPCNISSWWNFGSFLGACLAIQILTGLFLAMHYTSDTTTAFSSVTHICRDVNYGWLIRYLHANGASMFFICLFLHVGRGLYYGSYTFIETWNIGILLLSAVMATAFMGYVLPWGQMSFWGATVITNLLSAILYIGSTLVEWIWGGFSVDKATLTRFFAFHFILPFIIAALAIVHLLFLHETGSNNPTGLISDADKIPFHPHYTIKDALGFLLMSLFLLSLVLFSPDLLGDPDNYSPANPLNTPPHIKPEWYFLFAYAILRSIPNKLGGVIALVLSILILAIVPFLHNANQRSMIFRPLSQCLYWALVAGLITLTWIGGQPVEHPFIIIGQVASILYFLIILILMPLASFLENKLLKW</sequence>
<dbReference type="EMBL" id="AJ389535">
    <property type="protein sequence ID" value="CAC80530.1"/>
    <property type="molecule type" value="Genomic_DNA"/>
</dbReference>
<dbReference type="SMR" id="Q8W9F5"/>
<dbReference type="GO" id="GO:0005743">
    <property type="term" value="C:mitochondrial inner membrane"/>
    <property type="evidence" value="ECO:0007669"/>
    <property type="project" value="UniProtKB-SubCell"/>
</dbReference>
<dbReference type="GO" id="GO:0045275">
    <property type="term" value="C:respiratory chain complex III"/>
    <property type="evidence" value="ECO:0007669"/>
    <property type="project" value="InterPro"/>
</dbReference>
<dbReference type="GO" id="GO:0046872">
    <property type="term" value="F:metal ion binding"/>
    <property type="evidence" value="ECO:0007669"/>
    <property type="project" value="UniProtKB-KW"/>
</dbReference>
<dbReference type="GO" id="GO:0008121">
    <property type="term" value="F:ubiquinol-cytochrome-c reductase activity"/>
    <property type="evidence" value="ECO:0007669"/>
    <property type="project" value="InterPro"/>
</dbReference>
<dbReference type="GO" id="GO:0006122">
    <property type="term" value="P:mitochondrial electron transport, ubiquinol to cytochrome c"/>
    <property type="evidence" value="ECO:0007669"/>
    <property type="project" value="TreeGrafter"/>
</dbReference>
<dbReference type="CDD" id="cd00290">
    <property type="entry name" value="cytochrome_b_C"/>
    <property type="match status" value="1"/>
</dbReference>
<dbReference type="CDD" id="cd00284">
    <property type="entry name" value="Cytochrome_b_N"/>
    <property type="match status" value="1"/>
</dbReference>
<dbReference type="FunFam" id="1.20.810.10:FF:000002">
    <property type="entry name" value="Cytochrome b"/>
    <property type="match status" value="1"/>
</dbReference>
<dbReference type="Gene3D" id="1.20.810.10">
    <property type="entry name" value="Cytochrome Bc1 Complex, Chain C"/>
    <property type="match status" value="1"/>
</dbReference>
<dbReference type="InterPro" id="IPR005798">
    <property type="entry name" value="Cyt_b/b6_C"/>
</dbReference>
<dbReference type="InterPro" id="IPR036150">
    <property type="entry name" value="Cyt_b/b6_C_sf"/>
</dbReference>
<dbReference type="InterPro" id="IPR005797">
    <property type="entry name" value="Cyt_b/b6_N"/>
</dbReference>
<dbReference type="InterPro" id="IPR027387">
    <property type="entry name" value="Cytb/b6-like_sf"/>
</dbReference>
<dbReference type="InterPro" id="IPR030689">
    <property type="entry name" value="Cytochrome_b"/>
</dbReference>
<dbReference type="InterPro" id="IPR048260">
    <property type="entry name" value="Cytochrome_b_C_euk/bac"/>
</dbReference>
<dbReference type="InterPro" id="IPR048259">
    <property type="entry name" value="Cytochrome_b_N_euk/bac"/>
</dbReference>
<dbReference type="InterPro" id="IPR016174">
    <property type="entry name" value="Di-haem_cyt_TM"/>
</dbReference>
<dbReference type="PANTHER" id="PTHR19271">
    <property type="entry name" value="CYTOCHROME B"/>
    <property type="match status" value="1"/>
</dbReference>
<dbReference type="PANTHER" id="PTHR19271:SF16">
    <property type="entry name" value="CYTOCHROME B"/>
    <property type="match status" value="1"/>
</dbReference>
<dbReference type="Pfam" id="PF00032">
    <property type="entry name" value="Cytochrom_B_C"/>
    <property type="match status" value="1"/>
</dbReference>
<dbReference type="Pfam" id="PF00033">
    <property type="entry name" value="Cytochrome_B"/>
    <property type="match status" value="1"/>
</dbReference>
<dbReference type="PIRSF" id="PIRSF038885">
    <property type="entry name" value="COB"/>
    <property type="match status" value="1"/>
</dbReference>
<dbReference type="SUPFAM" id="SSF81648">
    <property type="entry name" value="a domain/subunit of cytochrome bc1 complex (Ubiquinol-cytochrome c reductase)"/>
    <property type="match status" value="1"/>
</dbReference>
<dbReference type="SUPFAM" id="SSF81342">
    <property type="entry name" value="Transmembrane di-heme cytochromes"/>
    <property type="match status" value="1"/>
</dbReference>
<dbReference type="PROSITE" id="PS51003">
    <property type="entry name" value="CYTB_CTER"/>
    <property type="match status" value="1"/>
</dbReference>
<dbReference type="PROSITE" id="PS51002">
    <property type="entry name" value="CYTB_NTER"/>
    <property type="match status" value="1"/>
</dbReference>
<protein>
    <recommendedName>
        <fullName>Cytochrome b</fullName>
    </recommendedName>
    <alternativeName>
        <fullName>Complex III subunit 3</fullName>
    </alternativeName>
    <alternativeName>
        <fullName>Complex III subunit III</fullName>
    </alternativeName>
    <alternativeName>
        <fullName>Cytochrome b-c1 complex subunit 3</fullName>
    </alternativeName>
    <alternativeName>
        <fullName>Ubiquinol-cytochrome-c reductase complex cytochrome b subunit</fullName>
    </alternativeName>
</protein>
<evidence type="ECO:0000250" key="1"/>
<evidence type="ECO:0000250" key="2">
    <source>
        <dbReference type="UniProtKB" id="P00157"/>
    </source>
</evidence>
<evidence type="ECO:0000255" key="3">
    <source>
        <dbReference type="PROSITE-ProRule" id="PRU00967"/>
    </source>
</evidence>
<evidence type="ECO:0000255" key="4">
    <source>
        <dbReference type="PROSITE-ProRule" id="PRU00968"/>
    </source>
</evidence>
<geneLocation type="mitochondrion"/>
<feature type="chain" id="PRO_0000061266" description="Cytochrome b">
    <location>
        <begin position="1"/>
        <end position="379"/>
    </location>
</feature>
<feature type="transmembrane region" description="Helical" evidence="2">
    <location>
        <begin position="33"/>
        <end position="53"/>
    </location>
</feature>
<feature type="transmembrane region" description="Helical" evidence="2">
    <location>
        <begin position="77"/>
        <end position="98"/>
    </location>
</feature>
<feature type="transmembrane region" description="Helical" evidence="2">
    <location>
        <begin position="113"/>
        <end position="133"/>
    </location>
</feature>
<feature type="transmembrane region" description="Helical" evidence="2">
    <location>
        <begin position="178"/>
        <end position="198"/>
    </location>
</feature>
<feature type="transmembrane region" description="Helical" evidence="2">
    <location>
        <begin position="226"/>
        <end position="246"/>
    </location>
</feature>
<feature type="transmembrane region" description="Helical" evidence="2">
    <location>
        <begin position="288"/>
        <end position="308"/>
    </location>
</feature>
<feature type="transmembrane region" description="Helical" evidence="2">
    <location>
        <begin position="320"/>
        <end position="340"/>
    </location>
</feature>
<feature type="transmembrane region" description="Helical" evidence="2">
    <location>
        <begin position="347"/>
        <end position="367"/>
    </location>
</feature>
<feature type="binding site" description="axial binding residue" evidence="2">
    <location>
        <position position="83"/>
    </location>
    <ligand>
        <name>heme b</name>
        <dbReference type="ChEBI" id="CHEBI:60344"/>
        <label>b562</label>
    </ligand>
    <ligandPart>
        <name>Fe</name>
        <dbReference type="ChEBI" id="CHEBI:18248"/>
    </ligandPart>
</feature>
<feature type="binding site" description="axial binding residue" evidence="2">
    <location>
        <position position="97"/>
    </location>
    <ligand>
        <name>heme b</name>
        <dbReference type="ChEBI" id="CHEBI:60344"/>
        <label>b566</label>
    </ligand>
    <ligandPart>
        <name>Fe</name>
        <dbReference type="ChEBI" id="CHEBI:18248"/>
    </ligandPart>
</feature>
<feature type="binding site" description="axial binding residue" evidence="2">
    <location>
        <position position="182"/>
    </location>
    <ligand>
        <name>heme b</name>
        <dbReference type="ChEBI" id="CHEBI:60344"/>
        <label>b562</label>
    </ligand>
    <ligandPart>
        <name>Fe</name>
        <dbReference type="ChEBI" id="CHEBI:18248"/>
    </ligandPart>
</feature>
<feature type="binding site" description="axial binding residue" evidence="2">
    <location>
        <position position="196"/>
    </location>
    <ligand>
        <name>heme b</name>
        <dbReference type="ChEBI" id="CHEBI:60344"/>
        <label>b566</label>
    </ligand>
    <ligandPart>
        <name>Fe</name>
        <dbReference type="ChEBI" id="CHEBI:18248"/>
    </ligandPart>
</feature>
<feature type="binding site" evidence="2">
    <location>
        <position position="201"/>
    </location>
    <ligand>
        <name>a ubiquinone</name>
        <dbReference type="ChEBI" id="CHEBI:16389"/>
    </ligand>
</feature>
<organism>
    <name type="scientific">Napaeozapus insignis</name>
    <name type="common">Woodland jumping mouse</name>
    <name type="synonym">Zapus insignis</name>
    <dbReference type="NCBI Taxonomy" id="101671"/>
    <lineage>
        <taxon>Eukaryota</taxon>
        <taxon>Metazoa</taxon>
        <taxon>Chordata</taxon>
        <taxon>Craniata</taxon>
        <taxon>Vertebrata</taxon>
        <taxon>Euteleostomi</taxon>
        <taxon>Mammalia</taxon>
        <taxon>Eutheria</taxon>
        <taxon>Euarchontoglires</taxon>
        <taxon>Glires</taxon>
        <taxon>Rodentia</taxon>
        <taxon>Myomorpha</taxon>
        <taxon>Dipodoidea</taxon>
        <taxon>Dipodidae</taxon>
        <taxon>Zapodinae</taxon>
        <taxon>Napaeozapus</taxon>
    </lineage>
</organism>
<proteinExistence type="inferred from homology"/>
<keyword id="KW-0249">Electron transport</keyword>
<keyword id="KW-0349">Heme</keyword>
<keyword id="KW-0408">Iron</keyword>
<keyword id="KW-0472">Membrane</keyword>
<keyword id="KW-0479">Metal-binding</keyword>
<keyword id="KW-0496">Mitochondrion</keyword>
<keyword id="KW-0999">Mitochondrion inner membrane</keyword>
<keyword id="KW-0679">Respiratory chain</keyword>
<keyword id="KW-0812">Transmembrane</keyword>
<keyword id="KW-1133">Transmembrane helix</keyword>
<keyword id="KW-0813">Transport</keyword>
<keyword id="KW-0830">Ubiquinone</keyword>
<comment type="function">
    <text evidence="2">Component of the ubiquinol-cytochrome c reductase complex (complex III or cytochrome b-c1 complex) that is part of the mitochondrial respiratory chain. The b-c1 complex mediates electron transfer from ubiquinol to cytochrome c. Contributes to the generation of a proton gradient across the mitochondrial membrane that is then used for ATP synthesis.</text>
</comment>
<comment type="cofactor">
    <cofactor evidence="2">
        <name>heme b</name>
        <dbReference type="ChEBI" id="CHEBI:60344"/>
    </cofactor>
    <text evidence="2">Binds 2 heme b groups non-covalently.</text>
</comment>
<comment type="subunit">
    <text evidence="2">The cytochrome bc1 complex contains 11 subunits: 3 respiratory subunits (MT-CYB, CYC1 and UQCRFS1), 2 core proteins (UQCRC1 and UQCRC2) and 6 low-molecular weight proteins (UQCRH/QCR6, UQCRB/QCR7, UQCRQ/QCR8, UQCR10/QCR9, UQCR11/QCR10 and a cleavage product of UQCRFS1). This cytochrome bc1 complex then forms a dimer.</text>
</comment>
<comment type="subcellular location">
    <subcellularLocation>
        <location evidence="2">Mitochondrion inner membrane</location>
        <topology evidence="2">Multi-pass membrane protein</topology>
    </subcellularLocation>
</comment>
<comment type="miscellaneous">
    <text evidence="1">Heme 1 (or BL or b562) is low-potential and absorbs at about 562 nm, and heme 2 (or BH or b566) is high-potential and absorbs at about 566 nm.</text>
</comment>
<comment type="similarity">
    <text evidence="3 4">Belongs to the cytochrome b family.</text>
</comment>
<comment type="caution">
    <text evidence="2">The full-length protein contains only eight transmembrane helices, not nine as predicted by bioinformatics tools.</text>
</comment>
<name>CYB_NAPIN</name>
<gene>
    <name type="primary">MT-CYB</name>
    <name type="synonym">COB</name>
    <name type="synonym">CYTB</name>
    <name type="synonym">MTCYB</name>
</gene>
<reference key="1">
    <citation type="submission" date="1999-08" db="EMBL/GenBank/DDBJ databases">
        <title>Monophyly of Anomaluromorpha (Pedetidae and Anomaluridae) among sciurognath rodents evidenced by the mitochondrial cytochrome b and 12S rRNA.</title>
        <authorList>
            <person name="Montgelard C."/>
            <person name="Bentz S."/>
            <person name="Tirard C."/>
            <person name="Verneau O."/>
            <person name="Catzeflis F.M."/>
        </authorList>
    </citation>
    <scope>NUCLEOTIDE SEQUENCE [GENOMIC DNA]</scope>
    <source>
        <strain>Isolate T-228</strain>
    </source>
</reference>